<reference key="1">
    <citation type="journal article" date="1998" name="Appl. Environ. Microbiol.">
        <title>Purification, characterization, and mechanism of a flavin mononucleotide-dependent 2-nitropropane dioxygenase from Neurospora crassa.</title>
        <authorList>
            <person name="Gorlatova N."/>
            <person name="Tchorzewski M."/>
            <person name="Kurihara T."/>
            <person name="Soda K."/>
            <person name="Esaki N."/>
        </authorList>
    </citation>
    <scope>NUCLEOTIDE SEQUENCE [MRNA]</scope>
    <scope>CATALYTIC ACTIVITY</scope>
    <scope>SUBSTRATE SPECIFICITY</scope>
    <scope>COFACTOR</scope>
    <scope>BIOPHYSICOCHEMICAL PROPERTIES</scope>
    <scope>SUBUNIT</scope>
    <scope>REACTION MECHANISM</scope>
    <source>
        <strain>ATCC 10337 / FGSC 1758 / NBRC 6067 / IMI 53239</strain>
    </source>
</reference>
<reference key="2">
    <citation type="journal article" date="2003" name="Nucleic Acids Res.">
        <title>What's in the genome of a filamentous fungus? Analysis of the Neurospora genome sequence.</title>
        <authorList>
            <person name="Mannhaupt G."/>
            <person name="Montrone C."/>
            <person name="Haase D."/>
            <person name="Mewes H.-W."/>
            <person name="Aign V."/>
            <person name="Hoheisel J.D."/>
            <person name="Fartmann B."/>
            <person name="Nyakatura G."/>
            <person name="Kempken F."/>
            <person name="Maier J."/>
            <person name="Schulte U."/>
        </authorList>
    </citation>
    <scope>NUCLEOTIDE SEQUENCE [LARGE SCALE GENOMIC DNA]</scope>
    <source>
        <strain>ATCC 24698 / 74-OR23-1A / CBS 708.71 / DSM 1257 / FGSC 987</strain>
    </source>
</reference>
<reference key="3">
    <citation type="journal article" date="2003" name="Nature">
        <title>The genome sequence of the filamentous fungus Neurospora crassa.</title>
        <authorList>
            <person name="Galagan J.E."/>
            <person name="Calvo S.E."/>
            <person name="Borkovich K.A."/>
            <person name="Selker E.U."/>
            <person name="Read N.D."/>
            <person name="Jaffe D.B."/>
            <person name="FitzHugh W."/>
            <person name="Ma L.-J."/>
            <person name="Smirnov S."/>
            <person name="Purcell S."/>
            <person name="Rehman B."/>
            <person name="Elkins T."/>
            <person name="Engels R."/>
            <person name="Wang S."/>
            <person name="Nielsen C.B."/>
            <person name="Butler J."/>
            <person name="Endrizzi M."/>
            <person name="Qui D."/>
            <person name="Ianakiev P."/>
            <person name="Bell-Pedersen D."/>
            <person name="Nelson M.A."/>
            <person name="Werner-Washburne M."/>
            <person name="Selitrennikoff C.P."/>
            <person name="Kinsey J.A."/>
            <person name="Braun E.L."/>
            <person name="Zelter A."/>
            <person name="Schulte U."/>
            <person name="Kothe G.O."/>
            <person name="Jedd G."/>
            <person name="Mewes H.-W."/>
            <person name="Staben C."/>
            <person name="Marcotte E."/>
            <person name="Greenberg D."/>
            <person name="Roy A."/>
            <person name="Foley K."/>
            <person name="Naylor J."/>
            <person name="Stange-Thomann N."/>
            <person name="Barrett R."/>
            <person name="Gnerre S."/>
            <person name="Kamal M."/>
            <person name="Kamvysselis M."/>
            <person name="Mauceli E.W."/>
            <person name="Bielke C."/>
            <person name="Rudd S."/>
            <person name="Frishman D."/>
            <person name="Krystofova S."/>
            <person name="Rasmussen C."/>
            <person name="Metzenberg R.L."/>
            <person name="Perkins D.D."/>
            <person name="Kroken S."/>
            <person name="Cogoni C."/>
            <person name="Macino G."/>
            <person name="Catcheside D.E.A."/>
            <person name="Li W."/>
            <person name="Pratt R.J."/>
            <person name="Osmani S.A."/>
            <person name="DeSouza C.P.C."/>
            <person name="Glass N.L."/>
            <person name="Orbach M.J."/>
            <person name="Berglund J.A."/>
            <person name="Voelker R."/>
            <person name="Yarden O."/>
            <person name="Plamann M."/>
            <person name="Seiler S."/>
            <person name="Dunlap J.C."/>
            <person name="Radford A."/>
            <person name="Aramayo R."/>
            <person name="Natvig D.O."/>
            <person name="Alex L.A."/>
            <person name="Mannhaupt G."/>
            <person name="Ebbole D.J."/>
            <person name="Freitag M."/>
            <person name="Paulsen I."/>
            <person name="Sachs M.S."/>
            <person name="Lander E.S."/>
            <person name="Nusbaum C."/>
            <person name="Birren B.W."/>
        </authorList>
    </citation>
    <scope>NUCLEOTIDE SEQUENCE [LARGE SCALE GENOMIC DNA]</scope>
    <source>
        <strain>ATCC 24698 / 74-OR23-1A / CBS 708.71 / DSM 1257 / FGSC 987</strain>
    </source>
</reference>
<reference key="4">
    <citation type="journal article" date="2010" name="Arch. Biochem. Biophys.">
        <title>Nitronate monooxygenase, a model for anionic flavin semiquinone intermediates in oxidative catalysis.</title>
        <authorList>
            <person name="Gadda G."/>
            <person name="Francis K."/>
        </authorList>
    </citation>
    <scope>COFACTOR</scope>
    <scope>SUBSTRATE SPECIFICITY</scope>
    <scope>REACTION MECHANISM</scope>
</reference>
<accession>Q01284</accession>
<accession>Q7RV78</accession>
<sequence>MHFPGHSSKKEESAQAALTKLNSWFPTTKNPVIISAPMYLIANGTLAAEVSKAGGIGFVAGGSDFRPGSSHLTALSTELASARSRLGLTDRPLTPLPGIGVGLILTHTISVPYVTDTVLPILIEHSPQAVWLFANDPDFEASSEPGAKGTAKQIIEALHASGFVVFFQVGTVKDARKAAADGADVIVAQGIDAGGHQLATGSGIVSLVPEVRDMLDREFKEREVVVVAAGGVADGRGVVGALGLGAEGVVLGTRFTVAVEASTPEFRRKVILETNDGGLNTVKSHFHDQINCNTIWHNVYDGRAVRNASYDDHAAGVPFEENHKKFKEAASSGDNSRAVTWSGTAVGLIKDQRPAGDIVRELREEAKERIKKIQAFAA</sequence>
<evidence type="ECO:0000250" key="1"/>
<evidence type="ECO:0000255" key="2"/>
<evidence type="ECO:0000269" key="3">
    <source>
    </source>
</evidence>
<evidence type="ECO:0000269" key="4">
    <source>
    </source>
</evidence>
<evidence type="ECO:0000305" key="5"/>
<comment type="function">
    <text>Catalyzes the oxidation of alkyl nitronates to produce the corresponding carbonyl compounds and nitrites. Anionic forms of nitroalkanes are much better substrates than are neutral forms.</text>
</comment>
<comment type="catalytic activity">
    <reaction evidence="4">
        <text>ethylnitronate + O2 = chemical entity + acetaldehyde + nitrite + H(+)</text>
        <dbReference type="Rhea" id="RHEA:28767"/>
        <dbReference type="ChEBI" id="CHEBI:15343"/>
        <dbReference type="ChEBI" id="CHEBI:15378"/>
        <dbReference type="ChEBI" id="CHEBI:15379"/>
        <dbReference type="ChEBI" id="CHEBI:16301"/>
        <dbReference type="ChEBI" id="CHEBI:24431"/>
        <dbReference type="ChEBI" id="CHEBI:77894"/>
        <dbReference type="EC" id="1.13.12.16"/>
    </reaction>
</comment>
<comment type="cofactor">
    <cofactor evidence="3 4">
        <name>FMN</name>
        <dbReference type="ChEBI" id="CHEBI:58210"/>
    </cofactor>
    <text evidence="3 4">Binds 1 FMN per subunit.</text>
</comment>
<comment type="biophysicochemical properties">
    <kinetics>
        <KM evidence="4">3.1 mM for 2-nitropropane</KM>
        <KM evidence="4">6 mM for nitroethane</KM>
        <KM evidence="4">8.3 mM for 1-nitropropane</KM>
    </kinetics>
</comment>
<comment type="subunit">
    <text evidence="4">Homodimer.</text>
</comment>
<comment type="similarity">
    <text evidence="5">Belongs to the nitronate monooxygenase family. NMO class II subfamily.</text>
</comment>
<proteinExistence type="evidence at protein level"/>
<keyword id="KW-0285">Flavoprotein</keyword>
<keyword id="KW-0288">FMN</keyword>
<keyword id="KW-0503">Monooxygenase</keyword>
<keyword id="KW-0560">Oxidoreductase</keyword>
<keyword id="KW-1185">Reference proteome</keyword>
<protein>
    <recommendedName>
        <fullName>Nitronate monooxygenase</fullName>
        <ecNumber>1.13.12.16</ecNumber>
    </recommendedName>
    <alternativeName>
        <fullName>2-nitropropane dioxygenase</fullName>
        <shortName>2-NPD</shortName>
    </alternativeName>
    <alternativeName>
        <fullName>Nitroalkane oxidase</fullName>
    </alternativeName>
</protein>
<name>2NPD_NEUCR</name>
<dbReference type="EC" id="1.13.12.16"/>
<dbReference type="EMBL" id="U22530">
    <property type="protein sequence ID" value="AAA64218.1"/>
    <property type="molecule type" value="mRNA"/>
</dbReference>
<dbReference type="EMBL" id="BX908812">
    <property type="protein sequence ID" value="CAF06155.1"/>
    <property type="molecule type" value="Genomic_DNA"/>
</dbReference>
<dbReference type="EMBL" id="CM002241">
    <property type="protein sequence ID" value="EAA28352.1"/>
    <property type="molecule type" value="Genomic_DNA"/>
</dbReference>
<dbReference type="PIR" id="T46693">
    <property type="entry name" value="T46693"/>
</dbReference>
<dbReference type="RefSeq" id="XP_957588.1">
    <property type="nucleotide sequence ID" value="XM_952495.3"/>
</dbReference>
<dbReference type="SMR" id="Q01284"/>
<dbReference type="STRING" id="367110.Q01284"/>
<dbReference type="PaxDb" id="5141-EFNCRP00000003619"/>
<dbReference type="EnsemblFungi" id="EAA28352">
    <property type="protein sequence ID" value="EAA28352"/>
    <property type="gene ID" value="NCU03949"/>
</dbReference>
<dbReference type="GeneID" id="3873678"/>
<dbReference type="KEGG" id="ncr:NCU03949"/>
<dbReference type="VEuPathDB" id="FungiDB:NCU03949"/>
<dbReference type="HOGENOM" id="CLU_038732_9_0_1"/>
<dbReference type="InParanoid" id="Q01284"/>
<dbReference type="OMA" id="FLFTPEC"/>
<dbReference type="OrthoDB" id="2349068at2759"/>
<dbReference type="BioCyc" id="MetaCyc:MONOMER-302"/>
<dbReference type="BRENDA" id="1.13.11.32">
    <property type="organism ID" value="3627"/>
</dbReference>
<dbReference type="BRENDA" id="1.13.12.16">
    <property type="organism ID" value="3627"/>
</dbReference>
<dbReference type="SABIO-RK" id="Q01284"/>
<dbReference type="Proteomes" id="UP000001805">
    <property type="component" value="Chromosome 5, Linkage Group VI"/>
</dbReference>
<dbReference type="GO" id="GO:0003700">
    <property type="term" value="F:DNA-binding transcription factor activity"/>
    <property type="evidence" value="ECO:0000318"/>
    <property type="project" value="GO_Central"/>
</dbReference>
<dbReference type="GO" id="GO:0018580">
    <property type="term" value="F:nitronate monooxygenase activity"/>
    <property type="evidence" value="ECO:0007669"/>
    <property type="project" value="UniProtKB-EC"/>
</dbReference>
<dbReference type="GO" id="GO:0009410">
    <property type="term" value="P:response to xenobiotic stimulus"/>
    <property type="evidence" value="ECO:0000318"/>
    <property type="project" value="GO_Central"/>
</dbReference>
<dbReference type="CDD" id="cd04730">
    <property type="entry name" value="NPD_like"/>
    <property type="match status" value="1"/>
</dbReference>
<dbReference type="FunFam" id="3.20.20.70:FF:000422">
    <property type="entry name" value="FMN-dependent 2-nitropropane dioxygenase"/>
    <property type="match status" value="1"/>
</dbReference>
<dbReference type="Gene3D" id="3.20.20.70">
    <property type="entry name" value="Aldolase class I"/>
    <property type="match status" value="1"/>
</dbReference>
<dbReference type="InterPro" id="IPR013785">
    <property type="entry name" value="Aldolase_TIM"/>
</dbReference>
<dbReference type="InterPro" id="IPR004136">
    <property type="entry name" value="NMO"/>
</dbReference>
<dbReference type="PANTHER" id="PTHR32332">
    <property type="entry name" value="2-NITROPROPANE DIOXYGENASE"/>
    <property type="match status" value="1"/>
</dbReference>
<dbReference type="PANTHER" id="PTHR32332:SF34">
    <property type="entry name" value="2-NITROPROPANE DIOXYGENASE FAMILY, PUTATIVE-RELATED"/>
    <property type="match status" value="1"/>
</dbReference>
<dbReference type="Pfam" id="PF03060">
    <property type="entry name" value="NMO"/>
    <property type="match status" value="1"/>
</dbReference>
<dbReference type="SUPFAM" id="SSF51412">
    <property type="entry name" value="Inosine monophosphate dehydrogenase (IMPDH)"/>
    <property type="match status" value="1"/>
</dbReference>
<organism>
    <name type="scientific">Neurospora crassa (strain ATCC 24698 / 74-OR23-1A / CBS 708.71 / DSM 1257 / FGSC 987)</name>
    <dbReference type="NCBI Taxonomy" id="367110"/>
    <lineage>
        <taxon>Eukaryota</taxon>
        <taxon>Fungi</taxon>
        <taxon>Dikarya</taxon>
        <taxon>Ascomycota</taxon>
        <taxon>Pezizomycotina</taxon>
        <taxon>Sordariomycetes</taxon>
        <taxon>Sordariomycetidae</taxon>
        <taxon>Sordariales</taxon>
        <taxon>Sordariaceae</taxon>
        <taxon>Neurospora</taxon>
    </lineage>
</organism>
<gene>
    <name type="primary">ncd-2</name>
    <name type="ORF">G17A4.200</name>
    <name type="ORF">NCU03949</name>
</gene>
<feature type="propeptide" id="PRO_0000020575" evidence="2">
    <location>
        <begin position="1"/>
        <end position="15"/>
    </location>
</feature>
<feature type="chain" id="PRO_0000020576" description="Nitronate monooxygenase">
    <location>
        <begin position="16"/>
        <end position="378"/>
    </location>
</feature>
<feature type="active site" description="Proton acceptor" evidence="2">
    <location>
        <position position="196"/>
    </location>
</feature>
<feature type="binding site" evidence="1">
    <location>
        <begin position="37"/>
        <end position="39"/>
    </location>
    <ligand>
        <name>FMN</name>
        <dbReference type="ChEBI" id="CHEBI:58210"/>
    </ligand>
</feature>
<feature type="binding site" evidence="1">
    <location>
        <position position="196"/>
    </location>
    <ligand>
        <name>substrate</name>
    </ligand>
</feature>
<feature type="binding site" evidence="1">
    <location>
        <begin position="229"/>
        <end position="231"/>
    </location>
    <ligand>
        <name>FMN</name>
        <dbReference type="ChEBI" id="CHEBI:58210"/>
    </ligand>
</feature>
<feature type="binding site" evidence="1">
    <location>
        <begin position="252"/>
        <end position="253"/>
    </location>
    <ligand>
        <name>FMN</name>
        <dbReference type="ChEBI" id="CHEBI:58210"/>
    </ligand>
</feature>